<feature type="chain" id="PRO_0000058832" description="Serine/threonine-protein phosphatase 2B catalytic subunit A1">
    <location>
        <begin position="1"/>
        <end position="639"/>
    </location>
</feature>
<feature type="region of interest" description="Disordered" evidence="2">
    <location>
        <begin position="494"/>
        <end position="602"/>
    </location>
</feature>
<feature type="compositionally biased region" description="Basic and acidic residues" evidence="2">
    <location>
        <begin position="494"/>
        <end position="503"/>
    </location>
</feature>
<feature type="compositionally biased region" description="Low complexity" evidence="2">
    <location>
        <begin position="515"/>
        <end position="527"/>
    </location>
</feature>
<feature type="compositionally biased region" description="Low complexity" evidence="2">
    <location>
        <begin position="546"/>
        <end position="572"/>
    </location>
</feature>
<feature type="active site" description="Proton donor" evidence="1">
    <location>
        <position position="181"/>
    </location>
</feature>
<feature type="binding site" evidence="1">
    <location>
        <position position="120"/>
    </location>
    <ligand>
        <name>Fe cation</name>
        <dbReference type="ChEBI" id="CHEBI:24875"/>
    </ligand>
</feature>
<feature type="binding site" evidence="1">
    <location>
        <position position="122"/>
    </location>
    <ligand>
        <name>Fe cation</name>
        <dbReference type="ChEBI" id="CHEBI:24875"/>
    </ligand>
</feature>
<feature type="binding site" evidence="1">
    <location>
        <position position="148"/>
    </location>
    <ligand>
        <name>Fe cation</name>
        <dbReference type="ChEBI" id="CHEBI:24875"/>
    </ligand>
</feature>
<feature type="binding site" evidence="1">
    <location>
        <position position="148"/>
    </location>
    <ligand>
        <name>Zn(2+)</name>
        <dbReference type="ChEBI" id="CHEBI:29105"/>
    </ligand>
</feature>
<feature type="binding site" evidence="1">
    <location>
        <position position="180"/>
    </location>
    <ligand>
        <name>Zn(2+)</name>
        <dbReference type="ChEBI" id="CHEBI:29105"/>
    </ligand>
</feature>
<feature type="binding site" evidence="1">
    <location>
        <position position="229"/>
    </location>
    <ligand>
        <name>Zn(2+)</name>
        <dbReference type="ChEBI" id="CHEBI:29105"/>
    </ligand>
</feature>
<feature type="binding site" evidence="1">
    <location>
        <position position="311"/>
    </location>
    <ligand>
        <name>Zn(2+)</name>
        <dbReference type="ChEBI" id="CHEBI:29105"/>
    </ligand>
</feature>
<feature type="helix" evidence="4">
    <location>
        <begin position="59"/>
        <end position="62"/>
    </location>
</feature>
<feature type="helix" evidence="4">
    <location>
        <begin position="73"/>
        <end position="81"/>
    </location>
</feature>
<feature type="helix" evidence="4">
    <location>
        <begin position="88"/>
        <end position="104"/>
    </location>
</feature>
<feature type="strand" evidence="4">
    <location>
        <begin position="107"/>
        <end position="111"/>
    </location>
</feature>
<feature type="strand" evidence="4">
    <location>
        <begin position="113"/>
        <end position="118"/>
    </location>
</feature>
<feature type="helix" evidence="4">
    <location>
        <begin position="125"/>
        <end position="135"/>
    </location>
</feature>
<feature type="turn" evidence="4">
    <location>
        <begin position="138"/>
        <end position="140"/>
    </location>
</feature>
<feature type="strand" evidence="4">
    <location>
        <begin position="143"/>
        <end position="145"/>
    </location>
</feature>
<feature type="strand" evidence="4">
    <location>
        <begin position="150"/>
        <end position="153"/>
    </location>
</feature>
<feature type="helix" evidence="4">
    <location>
        <begin position="156"/>
        <end position="169"/>
    </location>
</feature>
<feature type="turn" evidence="4">
    <location>
        <begin position="171"/>
        <end position="173"/>
    </location>
</feature>
<feature type="strand" evidence="4">
    <location>
        <begin position="174"/>
        <end position="176"/>
    </location>
</feature>
<feature type="helix" evidence="4">
    <location>
        <begin position="184"/>
        <end position="189"/>
    </location>
</feature>
<feature type="helix" evidence="4">
    <location>
        <begin position="192"/>
        <end position="199"/>
    </location>
</feature>
<feature type="helix" evidence="4">
    <location>
        <begin position="202"/>
        <end position="212"/>
    </location>
</feature>
<feature type="strand" evidence="4">
    <location>
        <begin position="218"/>
        <end position="221"/>
    </location>
</feature>
<feature type="turn" evidence="4">
    <location>
        <begin position="222"/>
        <end position="224"/>
    </location>
</feature>
<feature type="strand" evidence="4">
    <location>
        <begin position="225"/>
        <end position="227"/>
    </location>
</feature>
<feature type="helix" evidence="4">
    <location>
        <begin position="239"/>
        <end position="243"/>
    </location>
</feature>
<feature type="strand" evidence="4">
    <location>
        <begin position="253"/>
        <end position="255"/>
    </location>
</feature>
<feature type="helix" evidence="4">
    <location>
        <begin position="256"/>
        <end position="262"/>
    </location>
</feature>
<feature type="turn" evidence="4">
    <location>
        <begin position="267"/>
        <end position="270"/>
    </location>
</feature>
<feature type="strand" evidence="4">
    <location>
        <begin position="277"/>
        <end position="280"/>
    </location>
</feature>
<feature type="turn" evidence="4">
    <location>
        <begin position="282"/>
        <end position="284"/>
    </location>
</feature>
<feature type="strand" evidence="4">
    <location>
        <begin position="285"/>
        <end position="290"/>
    </location>
</feature>
<feature type="helix" evidence="4">
    <location>
        <begin position="292"/>
        <end position="302"/>
    </location>
</feature>
<feature type="strand" evidence="4">
    <location>
        <begin position="305"/>
        <end position="309"/>
    </location>
</feature>
<feature type="strand" evidence="4">
    <location>
        <begin position="317"/>
        <end position="320"/>
    </location>
</feature>
<feature type="turn" evidence="4">
    <location>
        <begin position="325"/>
        <end position="327"/>
    </location>
</feature>
<feature type="strand" evidence="4">
    <location>
        <begin position="329"/>
        <end position="335"/>
    </location>
</feature>
<feature type="helix" evidence="4">
    <location>
        <begin position="341"/>
        <end position="343"/>
    </location>
</feature>
<feature type="strand" evidence="4">
    <location>
        <begin position="349"/>
        <end position="354"/>
    </location>
</feature>
<feature type="strand" evidence="4">
    <location>
        <begin position="359"/>
        <end position="364"/>
    </location>
</feature>
<feature type="helix" evidence="4">
    <location>
        <begin position="374"/>
        <end position="376"/>
    </location>
</feature>
<feature type="helix" evidence="4">
    <location>
        <begin position="379"/>
        <end position="398"/>
    </location>
</feature>
<accession>O42773</accession>
<accession>J9W089</accession>
<sequence>MASPATQTANAIAAINNRSNLVIPEIDFTQHQLENGEIVSTTERVIKDVQAPAMYVPTDDQFWSKVDKTKPDIAFLKNHFYREGRLTEEQALYILEKGGELLRSEPNLLEVDAPITVCGDIHGQYYDLMKLFEVGGNPADTRYLFLGDYVDRGYFSIECVLYLWSLKMWYPDTLFLLRGNHECRHLTDYFTFKLECKHKYSETVYNACMESFCNLPLAAVMNKQFLCIHGGLSPELHTLDDLRSINRFREPPTQGLMCDILWADPLEDFGSEKTNENFLHNHVRGCSYFFTYNAACQFLERNNLLSIIRAHEAQDAGYRMYRKTKTTGFPSVMTIFSAPNYLDVYSNKAAVLKYESNVMNIRQFNCTPHPYWLPNFMDVFTWSLPFVGEKITDMLIAILNCCTKEELEEEDEEFPLNAPEPTDAESAAERRQIIKNKILAVGRMSRVFSLLREESERVSELKSISGSNALPAGMLASGAEGIKEAIQGFEDARKSDIENERLPPDIIDPDEDKPASPSASPIMPATPEEIPSEIPYDSPITGTPRTPISSAIASGSPGSPGTPTSPSIGGPPLTAWRPGHGRRTSLGTTKTSPSTRRRSLENTMHLIRDVVGGKDAQGDGQLERLAEVISSPTKGGQGE</sequence>
<gene>
    <name type="primary">CNA1</name>
    <name type="ORF">CNAG_04796</name>
</gene>
<dbReference type="EC" id="3.1.3.16"/>
<dbReference type="EMBL" id="AF042082">
    <property type="protein sequence ID" value="AAB97372.1"/>
    <property type="molecule type" value="Genomic_DNA"/>
</dbReference>
<dbReference type="EMBL" id="CP003829">
    <property type="protein sequence ID" value="AFR97420.1"/>
    <property type="molecule type" value="Genomic_DNA"/>
</dbReference>
<dbReference type="RefSeq" id="XP_012052213.1">
    <property type="nucleotide sequence ID" value="XM_012196823.1"/>
</dbReference>
<dbReference type="PDB" id="6TZ8">
    <property type="method" value="X-ray"/>
    <property type="resolution" value="3.30 A"/>
    <property type="chains" value="A/D=34-402"/>
</dbReference>
<dbReference type="PDBsum" id="6TZ8"/>
<dbReference type="SMR" id="O42773"/>
<dbReference type="GeneID" id="23888175"/>
<dbReference type="KEGG" id="cng:CNAG_04796"/>
<dbReference type="VEuPathDB" id="FungiDB:CNAG_04796"/>
<dbReference type="HOGENOM" id="CLU_004962_6_1_1"/>
<dbReference type="OrthoDB" id="5679at5206"/>
<dbReference type="PHI-base" id="PHI:89"/>
<dbReference type="Proteomes" id="UP000010091">
    <property type="component" value="Chromosome 10"/>
</dbReference>
<dbReference type="GO" id="GO:0005955">
    <property type="term" value="C:calcineurin complex"/>
    <property type="evidence" value="ECO:0000353"/>
    <property type="project" value="UniProtKB"/>
</dbReference>
<dbReference type="GO" id="GO:0120105">
    <property type="term" value="C:mitotic actomyosin contractile ring, intermediate layer"/>
    <property type="evidence" value="ECO:0007669"/>
    <property type="project" value="EnsemblFungi"/>
</dbReference>
<dbReference type="GO" id="GO:0005516">
    <property type="term" value="F:calmodulin binding"/>
    <property type="evidence" value="ECO:0007669"/>
    <property type="project" value="UniProtKB-KW"/>
</dbReference>
<dbReference type="GO" id="GO:0033192">
    <property type="term" value="F:calmodulin-dependent protein phosphatase activity"/>
    <property type="evidence" value="ECO:0000314"/>
    <property type="project" value="UniProtKB"/>
</dbReference>
<dbReference type="GO" id="GO:0008199">
    <property type="term" value="F:ferric iron binding"/>
    <property type="evidence" value="ECO:0000314"/>
    <property type="project" value="UniProtKB"/>
</dbReference>
<dbReference type="GO" id="GO:0008270">
    <property type="term" value="F:zinc ion binding"/>
    <property type="evidence" value="ECO:0000314"/>
    <property type="project" value="UniProtKB"/>
</dbReference>
<dbReference type="GO" id="GO:0097720">
    <property type="term" value="P:calcineurin-mediated signaling"/>
    <property type="evidence" value="ECO:0007669"/>
    <property type="project" value="EnsemblFungi"/>
</dbReference>
<dbReference type="GO" id="GO:0071277">
    <property type="term" value="P:cellular response to calcium ion"/>
    <property type="evidence" value="ECO:0007669"/>
    <property type="project" value="EnsemblFungi"/>
</dbReference>
<dbReference type="GO" id="GO:0035556">
    <property type="term" value="P:intracellular signal transduction"/>
    <property type="evidence" value="ECO:0000315"/>
    <property type="project" value="UniProtKB"/>
</dbReference>
<dbReference type="GO" id="GO:1905949">
    <property type="term" value="P:negative regulation of calcium ion import across plasma membrane"/>
    <property type="evidence" value="ECO:0007669"/>
    <property type="project" value="EnsemblFungi"/>
</dbReference>
<dbReference type="GO" id="GO:1903473">
    <property type="term" value="P:positive regulation of mitotic actomyosin contractile ring contraction"/>
    <property type="evidence" value="ECO:0007669"/>
    <property type="project" value="EnsemblFungi"/>
</dbReference>
<dbReference type="GO" id="GO:0140281">
    <property type="term" value="P:positive regulation of mitotic division septum assembly"/>
    <property type="evidence" value="ECO:0007669"/>
    <property type="project" value="EnsemblFungi"/>
</dbReference>
<dbReference type="GO" id="GO:1900182">
    <property type="term" value="P:positive regulation of protein localization to nucleus"/>
    <property type="evidence" value="ECO:0000315"/>
    <property type="project" value="UniProtKB"/>
</dbReference>
<dbReference type="GO" id="GO:0022604">
    <property type="term" value="P:regulation of cell morphogenesis"/>
    <property type="evidence" value="ECO:0007669"/>
    <property type="project" value="EnsemblFungi"/>
</dbReference>
<dbReference type="GO" id="GO:0031029">
    <property type="term" value="P:regulation of septation initiation signaling"/>
    <property type="evidence" value="ECO:0007669"/>
    <property type="project" value="EnsemblFungi"/>
</dbReference>
<dbReference type="CDD" id="cd07416">
    <property type="entry name" value="MPP_PP2B"/>
    <property type="match status" value="1"/>
</dbReference>
<dbReference type="FunFam" id="3.60.21.10:FF:000002">
    <property type="entry name" value="Serine/threonine-protein phosphatase"/>
    <property type="match status" value="1"/>
</dbReference>
<dbReference type="Gene3D" id="3.60.21.10">
    <property type="match status" value="1"/>
</dbReference>
<dbReference type="InterPro" id="IPR004843">
    <property type="entry name" value="Calcineurin-like_PHP_ApaH"/>
</dbReference>
<dbReference type="InterPro" id="IPR029052">
    <property type="entry name" value="Metallo-depent_PP-like"/>
</dbReference>
<dbReference type="InterPro" id="IPR041751">
    <property type="entry name" value="MPP_PP2B"/>
</dbReference>
<dbReference type="InterPro" id="IPR043360">
    <property type="entry name" value="PP2B"/>
</dbReference>
<dbReference type="InterPro" id="IPR006186">
    <property type="entry name" value="Ser/Thr-sp_prot-phosphatase"/>
</dbReference>
<dbReference type="PANTHER" id="PTHR45673">
    <property type="entry name" value="SERINE/THREONINE-PROTEIN PHOSPHATASE 2B CATALYTIC SUBUNIT 1-RELATED"/>
    <property type="match status" value="1"/>
</dbReference>
<dbReference type="Pfam" id="PF00149">
    <property type="entry name" value="Metallophos"/>
    <property type="match status" value="1"/>
</dbReference>
<dbReference type="PRINTS" id="PR00114">
    <property type="entry name" value="STPHPHTASE"/>
</dbReference>
<dbReference type="SMART" id="SM00156">
    <property type="entry name" value="PP2Ac"/>
    <property type="match status" value="1"/>
</dbReference>
<dbReference type="SUPFAM" id="SSF56300">
    <property type="entry name" value="Metallo-dependent phosphatases"/>
    <property type="match status" value="1"/>
</dbReference>
<dbReference type="PROSITE" id="PS00125">
    <property type="entry name" value="SER_THR_PHOSPHATASE"/>
    <property type="match status" value="1"/>
</dbReference>
<keyword id="KW-0002">3D-structure</keyword>
<keyword id="KW-0112">Calmodulin-binding</keyword>
<keyword id="KW-0378">Hydrolase</keyword>
<keyword id="KW-0408">Iron</keyword>
<keyword id="KW-0479">Metal-binding</keyword>
<keyword id="KW-0904">Protein phosphatase</keyword>
<keyword id="KW-0862">Zinc</keyword>
<protein>
    <recommendedName>
        <fullName>Serine/threonine-protein phosphatase 2B catalytic subunit A1</fullName>
        <ecNumber>3.1.3.16</ecNumber>
    </recommendedName>
    <alternativeName>
        <fullName>Calcineurin A1</fullName>
    </alternativeName>
</protein>
<comment type="function">
    <text evidence="1">Calcium-dependent, calmodulin-stimulated protein phosphatase. This subunit may have a role in the calmodulin activation of calcineurin (By similarity).</text>
</comment>
<comment type="catalytic activity">
    <reaction>
        <text>O-phospho-L-seryl-[protein] + H2O = L-seryl-[protein] + phosphate</text>
        <dbReference type="Rhea" id="RHEA:20629"/>
        <dbReference type="Rhea" id="RHEA-COMP:9863"/>
        <dbReference type="Rhea" id="RHEA-COMP:11604"/>
        <dbReference type="ChEBI" id="CHEBI:15377"/>
        <dbReference type="ChEBI" id="CHEBI:29999"/>
        <dbReference type="ChEBI" id="CHEBI:43474"/>
        <dbReference type="ChEBI" id="CHEBI:83421"/>
        <dbReference type="EC" id="3.1.3.16"/>
    </reaction>
</comment>
<comment type="catalytic activity">
    <reaction>
        <text>O-phospho-L-threonyl-[protein] + H2O = L-threonyl-[protein] + phosphate</text>
        <dbReference type="Rhea" id="RHEA:47004"/>
        <dbReference type="Rhea" id="RHEA-COMP:11060"/>
        <dbReference type="Rhea" id="RHEA-COMP:11605"/>
        <dbReference type="ChEBI" id="CHEBI:15377"/>
        <dbReference type="ChEBI" id="CHEBI:30013"/>
        <dbReference type="ChEBI" id="CHEBI:43474"/>
        <dbReference type="ChEBI" id="CHEBI:61977"/>
        <dbReference type="EC" id="3.1.3.16"/>
    </reaction>
</comment>
<comment type="cofactor">
    <cofactor evidence="1">
        <name>Fe(3+)</name>
        <dbReference type="ChEBI" id="CHEBI:29034"/>
    </cofactor>
    <text evidence="1">Binds 1 Fe(3+) ion per subunit.</text>
</comment>
<comment type="cofactor">
    <cofactor evidence="1">
        <name>Zn(2+)</name>
        <dbReference type="ChEBI" id="CHEBI:29105"/>
    </cofactor>
    <text evidence="1">Binds 1 zinc ion per subunit.</text>
</comment>
<comment type="subunit">
    <text>Composed of two components (A and B), the A component is the catalytic subunit and the B component confers calcium sensitivity.</text>
</comment>
<comment type="similarity">
    <text evidence="3">Belongs to the PPP phosphatase family. PP-2B subfamily.</text>
</comment>
<reference key="1">
    <citation type="journal article" date="1997" name="EMBO J.">
        <title>Calcineurin is required for virulence of Cryptococcus neoformans.</title>
        <authorList>
            <person name="Odom A."/>
            <person name="Muir S."/>
            <person name="Lim E."/>
            <person name="Toffaletti D.L."/>
            <person name="Perfect J.R."/>
            <person name="Heitman J."/>
        </authorList>
    </citation>
    <scope>NUCLEOTIDE SEQUENCE [GENOMIC DNA]</scope>
    <source>
        <strain>H99 / ATCC 208821 / CBS 10515 / FGSC 9487</strain>
    </source>
</reference>
<reference key="2">
    <citation type="journal article" date="2014" name="PLoS Genet.">
        <title>Analysis of the genome and transcriptome of Cryptococcus neoformans var. grubii reveals complex RNA expression and microevolution leading to virulence attenuation.</title>
        <authorList>
            <person name="Janbon G."/>
            <person name="Ormerod K.L."/>
            <person name="Paulet D."/>
            <person name="Byrnes E.J. III"/>
            <person name="Yadav V."/>
            <person name="Chatterjee G."/>
            <person name="Mullapudi N."/>
            <person name="Hon C.-C."/>
            <person name="Billmyre R.B."/>
            <person name="Brunel F."/>
            <person name="Bahn Y.-S."/>
            <person name="Chen W."/>
            <person name="Chen Y."/>
            <person name="Chow E.W.L."/>
            <person name="Coppee J.-Y."/>
            <person name="Floyd-Averette A."/>
            <person name="Gaillardin C."/>
            <person name="Gerik K.J."/>
            <person name="Goldberg J."/>
            <person name="Gonzalez-Hilarion S."/>
            <person name="Gujja S."/>
            <person name="Hamlin J.L."/>
            <person name="Hsueh Y.-P."/>
            <person name="Ianiri G."/>
            <person name="Jones S."/>
            <person name="Kodira C.D."/>
            <person name="Kozubowski L."/>
            <person name="Lam W."/>
            <person name="Marra M."/>
            <person name="Mesner L.D."/>
            <person name="Mieczkowski P.A."/>
            <person name="Moyrand F."/>
            <person name="Nielsen K."/>
            <person name="Proux C."/>
            <person name="Rossignol T."/>
            <person name="Schein J.E."/>
            <person name="Sun S."/>
            <person name="Wollschlaeger C."/>
            <person name="Wood I.A."/>
            <person name="Zeng Q."/>
            <person name="Neuveglise C."/>
            <person name="Newlon C.S."/>
            <person name="Perfect J.R."/>
            <person name="Lodge J.K."/>
            <person name="Idnurm A."/>
            <person name="Stajich J.E."/>
            <person name="Kronstad J.W."/>
            <person name="Sanyal K."/>
            <person name="Heitman J."/>
            <person name="Fraser J.A."/>
            <person name="Cuomo C.A."/>
            <person name="Dietrich F.S."/>
        </authorList>
    </citation>
    <scope>NUCLEOTIDE SEQUENCE [LARGE SCALE GENOMIC DNA]</scope>
    <source>
        <strain>H99 / ATCC 208821 / CBS 10515 / FGSC 9487</strain>
    </source>
</reference>
<proteinExistence type="evidence at protein level"/>
<name>PP2B1_CRYNH</name>
<evidence type="ECO:0000250" key="1"/>
<evidence type="ECO:0000256" key="2">
    <source>
        <dbReference type="SAM" id="MobiDB-lite"/>
    </source>
</evidence>
<evidence type="ECO:0000305" key="3"/>
<evidence type="ECO:0007829" key="4">
    <source>
        <dbReference type="PDB" id="6TZ8"/>
    </source>
</evidence>
<organism>
    <name type="scientific">Cryptococcus neoformans var. grubii serotype A (strain H99 / ATCC 208821 / CBS 10515 / FGSC 9487)</name>
    <name type="common">Filobasidiella neoformans var. grubii</name>
    <dbReference type="NCBI Taxonomy" id="235443"/>
    <lineage>
        <taxon>Eukaryota</taxon>
        <taxon>Fungi</taxon>
        <taxon>Dikarya</taxon>
        <taxon>Basidiomycota</taxon>
        <taxon>Agaricomycotina</taxon>
        <taxon>Tremellomycetes</taxon>
        <taxon>Tremellales</taxon>
        <taxon>Cryptococcaceae</taxon>
        <taxon>Cryptococcus</taxon>
        <taxon>Cryptococcus neoformans species complex</taxon>
    </lineage>
</organism>